<proteinExistence type="inferred from homology"/>
<organism>
    <name type="scientific">Xanthomonas campestris pv. campestris (strain 8004)</name>
    <dbReference type="NCBI Taxonomy" id="314565"/>
    <lineage>
        <taxon>Bacteria</taxon>
        <taxon>Pseudomonadati</taxon>
        <taxon>Pseudomonadota</taxon>
        <taxon>Gammaproteobacteria</taxon>
        <taxon>Lysobacterales</taxon>
        <taxon>Lysobacteraceae</taxon>
        <taxon>Xanthomonas</taxon>
    </lineage>
</organism>
<name>MUTS_XANC8</name>
<feature type="chain" id="PRO_0000224417" description="DNA mismatch repair protein MutS">
    <location>
        <begin position="1"/>
        <end position="873"/>
    </location>
</feature>
<feature type="binding site" evidence="1">
    <location>
        <begin position="625"/>
        <end position="632"/>
    </location>
    <ligand>
        <name>ATP</name>
        <dbReference type="ChEBI" id="CHEBI:30616"/>
    </ligand>
</feature>
<sequence>MQTADTKDKTKLSTGAAEHTPLMKQFFAAKSDYPDLLLFFRMGDFYELFYDDARKAARLLDITLTQRGSSGGAPIPMAGVPVHAYEGYLARLVALGESVAICEQIGDPALAKGLVERKVVRIVTPGTVTDEALLDERRDTLLMAISRSKQGYGLAWADLAGGRFLVNEVDSVDALEAEIARLEPAELLVPDEDNWPEFLRGRVGVRRRPPWLFDADSGRRQLLAFFKLHDLSGFGIDDKPCATAAAGALLGYVEETQKQRLPHLTSIAMEVASEAISMNAATRRHLELDTRVDGDTRNTLLGVLDSTVTPMGGRLLRRWLHRPLRLREVLVQRHHAVGSLIDTGADTDVREAFRALGDLERILTRVALRSARPRDFSTLRDGLALLPKVRTILAPLDSPRLQTLYAELGEHDATAHLLISAVAEQPPLKFSDGGVIATGYDADLDELRRLSTNADQFLIDLEQRERASSGIATLKVGYNRVHGYYIEISKGQAEKAPLHYSRRQTLTNAERYITEELKSFEDKVLSARERSLSREKLLYEGLLDALGGELEGLKRCASALSELDVLAGFAERAQALDWSQPELESAPCLHIERGRHPVVEAVRDQPFEPNDLDLHPDRRMLVITGPNMGGKSTYMRQNALIVLLAHIGSYVPASRAVIGPIDRILTRIGAGDDLARGQSTFMVEMAETSYILHHATPQSLVLMDEIGRGTSTYDGLALADAVARHLAHTNRCYTLFATHYFELTALADASHAGGGSGIANVHLDAVEHGERLVFMHAVKDGPANRSFGLQVAALAGLPKAAVQQARRRLAELEQRGGDSHAAEMAPAALDAPQQFGLFTAPSSAAQEALQALDPDELTPKQALEALYRLKALL</sequence>
<comment type="function">
    <text evidence="1">This protein is involved in the repair of mismatches in DNA. It is possible that it carries out the mismatch recognition step. This protein has a weak ATPase activity.</text>
</comment>
<comment type="similarity">
    <text evidence="1">Belongs to the DNA mismatch repair MutS family.</text>
</comment>
<comment type="sequence caution" evidence="2">
    <conflict type="erroneous initiation">
        <sequence resource="EMBL-CDS" id="AAY50083"/>
    </conflict>
</comment>
<keyword id="KW-0067">ATP-binding</keyword>
<keyword id="KW-0227">DNA damage</keyword>
<keyword id="KW-0234">DNA repair</keyword>
<keyword id="KW-0238">DNA-binding</keyword>
<keyword id="KW-0547">Nucleotide-binding</keyword>
<reference key="1">
    <citation type="journal article" date="2005" name="Genome Res.">
        <title>Comparative and functional genomic analyses of the pathogenicity of phytopathogen Xanthomonas campestris pv. campestris.</title>
        <authorList>
            <person name="Qian W."/>
            <person name="Jia Y."/>
            <person name="Ren S.-X."/>
            <person name="He Y.-Q."/>
            <person name="Feng J.-X."/>
            <person name="Lu L.-F."/>
            <person name="Sun Q."/>
            <person name="Ying G."/>
            <person name="Tang D.-J."/>
            <person name="Tang H."/>
            <person name="Wu W."/>
            <person name="Hao P."/>
            <person name="Wang L."/>
            <person name="Jiang B.-L."/>
            <person name="Zeng S."/>
            <person name="Gu W.-Y."/>
            <person name="Lu G."/>
            <person name="Rong L."/>
            <person name="Tian Y."/>
            <person name="Yao Z."/>
            <person name="Fu G."/>
            <person name="Chen B."/>
            <person name="Fang R."/>
            <person name="Qiang B."/>
            <person name="Chen Z."/>
            <person name="Zhao G.-P."/>
            <person name="Tang J.-L."/>
            <person name="He C."/>
        </authorList>
    </citation>
    <scope>NUCLEOTIDE SEQUENCE [LARGE SCALE GENOMIC DNA]</scope>
    <source>
        <strain>8004</strain>
    </source>
</reference>
<gene>
    <name evidence="1" type="primary">mutS</name>
    <name type="ordered locus">XC_3035</name>
</gene>
<protein>
    <recommendedName>
        <fullName evidence="1">DNA mismatch repair protein MutS</fullName>
    </recommendedName>
</protein>
<evidence type="ECO:0000255" key="1">
    <source>
        <dbReference type="HAMAP-Rule" id="MF_00096"/>
    </source>
</evidence>
<evidence type="ECO:0000305" key="2"/>
<accession>Q4US90</accession>
<dbReference type="EMBL" id="CP000050">
    <property type="protein sequence ID" value="AAY50083.1"/>
    <property type="status" value="ALT_INIT"/>
    <property type="molecule type" value="Genomic_DNA"/>
</dbReference>
<dbReference type="SMR" id="Q4US90"/>
<dbReference type="KEGG" id="xcb:XC_3035"/>
<dbReference type="HOGENOM" id="CLU_002472_4_0_6"/>
<dbReference type="Proteomes" id="UP000000420">
    <property type="component" value="Chromosome"/>
</dbReference>
<dbReference type="GO" id="GO:0005829">
    <property type="term" value="C:cytosol"/>
    <property type="evidence" value="ECO:0007669"/>
    <property type="project" value="TreeGrafter"/>
</dbReference>
<dbReference type="GO" id="GO:0005524">
    <property type="term" value="F:ATP binding"/>
    <property type="evidence" value="ECO:0007669"/>
    <property type="project" value="UniProtKB-UniRule"/>
</dbReference>
<dbReference type="GO" id="GO:0140664">
    <property type="term" value="F:ATP-dependent DNA damage sensor activity"/>
    <property type="evidence" value="ECO:0007669"/>
    <property type="project" value="InterPro"/>
</dbReference>
<dbReference type="GO" id="GO:0003684">
    <property type="term" value="F:damaged DNA binding"/>
    <property type="evidence" value="ECO:0007669"/>
    <property type="project" value="UniProtKB-UniRule"/>
</dbReference>
<dbReference type="GO" id="GO:0030983">
    <property type="term" value="F:mismatched DNA binding"/>
    <property type="evidence" value="ECO:0007669"/>
    <property type="project" value="InterPro"/>
</dbReference>
<dbReference type="GO" id="GO:0006298">
    <property type="term" value="P:mismatch repair"/>
    <property type="evidence" value="ECO:0007669"/>
    <property type="project" value="UniProtKB-UniRule"/>
</dbReference>
<dbReference type="CDD" id="cd03284">
    <property type="entry name" value="ABC_MutS1"/>
    <property type="match status" value="1"/>
</dbReference>
<dbReference type="FunFam" id="1.10.1420.10:FF:000018">
    <property type="entry name" value="DNA mismatch repair protein MutS"/>
    <property type="match status" value="1"/>
</dbReference>
<dbReference type="FunFam" id="3.30.420.110:FF:000023">
    <property type="entry name" value="DNA mismatch repair protein MutS"/>
    <property type="match status" value="1"/>
</dbReference>
<dbReference type="FunFam" id="3.40.1170.10:FF:000001">
    <property type="entry name" value="DNA mismatch repair protein MutS"/>
    <property type="match status" value="1"/>
</dbReference>
<dbReference type="FunFam" id="3.40.50.300:FF:000283">
    <property type="entry name" value="DNA mismatch repair protein MutS"/>
    <property type="match status" value="1"/>
</dbReference>
<dbReference type="Gene3D" id="1.10.1420.10">
    <property type="match status" value="2"/>
</dbReference>
<dbReference type="Gene3D" id="6.10.140.430">
    <property type="match status" value="1"/>
</dbReference>
<dbReference type="Gene3D" id="3.40.1170.10">
    <property type="entry name" value="DNA repair protein MutS, domain I"/>
    <property type="match status" value="1"/>
</dbReference>
<dbReference type="Gene3D" id="3.30.420.110">
    <property type="entry name" value="MutS, connector domain"/>
    <property type="match status" value="1"/>
</dbReference>
<dbReference type="Gene3D" id="3.40.50.300">
    <property type="entry name" value="P-loop containing nucleotide triphosphate hydrolases"/>
    <property type="match status" value="1"/>
</dbReference>
<dbReference type="HAMAP" id="MF_00096">
    <property type="entry name" value="MutS"/>
    <property type="match status" value="1"/>
</dbReference>
<dbReference type="InterPro" id="IPR005748">
    <property type="entry name" value="DNA_mismatch_repair_MutS"/>
</dbReference>
<dbReference type="InterPro" id="IPR007695">
    <property type="entry name" value="DNA_mismatch_repair_MutS-lik_N"/>
</dbReference>
<dbReference type="InterPro" id="IPR017261">
    <property type="entry name" value="DNA_mismatch_repair_MutS/MSH"/>
</dbReference>
<dbReference type="InterPro" id="IPR000432">
    <property type="entry name" value="DNA_mismatch_repair_MutS_C"/>
</dbReference>
<dbReference type="InterPro" id="IPR007861">
    <property type="entry name" value="DNA_mismatch_repair_MutS_clamp"/>
</dbReference>
<dbReference type="InterPro" id="IPR007696">
    <property type="entry name" value="DNA_mismatch_repair_MutS_core"/>
</dbReference>
<dbReference type="InterPro" id="IPR016151">
    <property type="entry name" value="DNA_mismatch_repair_MutS_N"/>
</dbReference>
<dbReference type="InterPro" id="IPR036187">
    <property type="entry name" value="DNA_mismatch_repair_MutS_sf"/>
</dbReference>
<dbReference type="InterPro" id="IPR007860">
    <property type="entry name" value="DNA_mmatch_repair_MutS_con_dom"/>
</dbReference>
<dbReference type="InterPro" id="IPR045076">
    <property type="entry name" value="MutS"/>
</dbReference>
<dbReference type="InterPro" id="IPR036678">
    <property type="entry name" value="MutS_con_dom_sf"/>
</dbReference>
<dbReference type="InterPro" id="IPR027417">
    <property type="entry name" value="P-loop_NTPase"/>
</dbReference>
<dbReference type="NCBIfam" id="TIGR01070">
    <property type="entry name" value="mutS1"/>
    <property type="match status" value="1"/>
</dbReference>
<dbReference type="NCBIfam" id="NF003810">
    <property type="entry name" value="PRK05399.1"/>
    <property type="match status" value="1"/>
</dbReference>
<dbReference type="PANTHER" id="PTHR11361:SF34">
    <property type="entry name" value="DNA MISMATCH REPAIR PROTEIN MSH1, MITOCHONDRIAL"/>
    <property type="match status" value="1"/>
</dbReference>
<dbReference type="PANTHER" id="PTHR11361">
    <property type="entry name" value="DNA MISMATCH REPAIR PROTEIN MUTS FAMILY MEMBER"/>
    <property type="match status" value="1"/>
</dbReference>
<dbReference type="Pfam" id="PF01624">
    <property type="entry name" value="MutS_I"/>
    <property type="match status" value="1"/>
</dbReference>
<dbReference type="Pfam" id="PF05188">
    <property type="entry name" value="MutS_II"/>
    <property type="match status" value="1"/>
</dbReference>
<dbReference type="Pfam" id="PF05192">
    <property type="entry name" value="MutS_III"/>
    <property type="match status" value="1"/>
</dbReference>
<dbReference type="Pfam" id="PF05190">
    <property type="entry name" value="MutS_IV"/>
    <property type="match status" value="1"/>
</dbReference>
<dbReference type="Pfam" id="PF00488">
    <property type="entry name" value="MutS_V"/>
    <property type="match status" value="1"/>
</dbReference>
<dbReference type="PIRSF" id="PIRSF037677">
    <property type="entry name" value="DNA_mis_repair_Msh6"/>
    <property type="match status" value="1"/>
</dbReference>
<dbReference type="SMART" id="SM00534">
    <property type="entry name" value="MUTSac"/>
    <property type="match status" value="1"/>
</dbReference>
<dbReference type="SMART" id="SM00533">
    <property type="entry name" value="MUTSd"/>
    <property type="match status" value="1"/>
</dbReference>
<dbReference type="SUPFAM" id="SSF55271">
    <property type="entry name" value="DNA repair protein MutS, domain I"/>
    <property type="match status" value="1"/>
</dbReference>
<dbReference type="SUPFAM" id="SSF53150">
    <property type="entry name" value="DNA repair protein MutS, domain II"/>
    <property type="match status" value="1"/>
</dbReference>
<dbReference type="SUPFAM" id="SSF48334">
    <property type="entry name" value="DNA repair protein MutS, domain III"/>
    <property type="match status" value="1"/>
</dbReference>
<dbReference type="SUPFAM" id="SSF52540">
    <property type="entry name" value="P-loop containing nucleoside triphosphate hydrolases"/>
    <property type="match status" value="1"/>
</dbReference>
<dbReference type="PROSITE" id="PS00486">
    <property type="entry name" value="DNA_MISMATCH_REPAIR_2"/>
    <property type="match status" value="1"/>
</dbReference>